<dbReference type="EC" id="3.1.-.-" evidence="1"/>
<dbReference type="EMBL" id="AM412317">
    <property type="protein sequence ID" value="CAL81979.1"/>
    <property type="molecule type" value="Genomic_DNA"/>
</dbReference>
<dbReference type="EMBL" id="CP000727">
    <property type="protein sequence ID" value="ABS37895.1"/>
    <property type="molecule type" value="Genomic_DNA"/>
</dbReference>
<dbReference type="RefSeq" id="YP_001252970.1">
    <property type="nucleotide sequence ID" value="NC_009495.1"/>
</dbReference>
<dbReference type="RefSeq" id="YP_001386377.1">
    <property type="nucleotide sequence ID" value="NC_009698.1"/>
</dbReference>
<dbReference type="SMR" id="A5HYX0"/>
<dbReference type="GeneID" id="5184681"/>
<dbReference type="KEGG" id="cbh:CLC_0492"/>
<dbReference type="KEGG" id="cbo:CBO0426"/>
<dbReference type="PATRIC" id="fig|413999.7.peg.430"/>
<dbReference type="HOGENOM" id="CLU_007838_0_0_9"/>
<dbReference type="PRO" id="PR:A5HYX0"/>
<dbReference type="Proteomes" id="UP000001986">
    <property type="component" value="Chromosome"/>
</dbReference>
<dbReference type="GO" id="GO:0051539">
    <property type="term" value="F:4 iron, 4 sulfur cluster binding"/>
    <property type="evidence" value="ECO:0007669"/>
    <property type="project" value="UniProtKB-KW"/>
</dbReference>
<dbReference type="GO" id="GO:0008409">
    <property type="term" value="F:5'-3' exonuclease activity"/>
    <property type="evidence" value="ECO:0007669"/>
    <property type="project" value="UniProtKB-UniRule"/>
</dbReference>
<dbReference type="GO" id="GO:0005524">
    <property type="term" value="F:ATP binding"/>
    <property type="evidence" value="ECO:0007669"/>
    <property type="project" value="UniProtKB-UniRule"/>
</dbReference>
<dbReference type="GO" id="GO:0003690">
    <property type="term" value="F:double-stranded DNA binding"/>
    <property type="evidence" value="ECO:0007669"/>
    <property type="project" value="UniProtKB-UniRule"/>
</dbReference>
<dbReference type="GO" id="GO:0004386">
    <property type="term" value="F:helicase activity"/>
    <property type="evidence" value="ECO:0007669"/>
    <property type="project" value="UniProtKB-KW"/>
</dbReference>
<dbReference type="GO" id="GO:0046872">
    <property type="term" value="F:metal ion binding"/>
    <property type="evidence" value="ECO:0007669"/>
    <property type="project" value="UniProtKB-KW"/>
</dbReference>
<dbReference type="GO" id="GO:0006310">
    <property type="term" value="P:DNA recombination"/>
    <property type="evidence" value="ECO:0000318"/>
    <property type="project" value="GO_Central"/>
</dbReference>
<dbReference type="GO" id="GO:0000724">
    <property type="term" value="P:double-strand break repair via homologous recombination"/>
    <property type="evidence" value="ECO:0007669"/>
    <property type="project" value="UniProtKB-UniRule"/>
</dbReference>
<dbReference type="FunFam" id="3.40.50.300:FF:002956">
    <property type="entry name" value="ATP-dependent helicase/deoxyribonuclease subunit B"/>
    <property type="match status" value="1"/>
</dbReference>
<dbReference type="FunFam" id="3.40.50.300:FF:002959">
    <property type="entry name" value="ATP-dependent helicase/deoxyribonuclease subunit B"/>
    <property type="match status" value="1"/>
</dbReference>
<dbReference type="FunFam" id="3.40.50.300:FF:003174">
    <property type="entry name" value="ATP-dependent helicase/deoxyribonuclease subunit B"/>
    <property type="match status" value="1"/>
</dbReference>
<dbReference type="Gene3D" id="3.90.320.10">
    <property type="match status" value="1"/>
</dbReference>
<dbReference type="Gene3D" id="6.10.140.1030">
    <property type="match status" value="1"/>
</dbReference>
<dbReference type="Gene3D" id="3.40.50.300">
    <property type="entry name" value="P-loop containing nucleotide triphosphate hydrolases"/>
    <property type="match status" value="3"/>
</dbReference>
<dbReference type="HAMAP" id="MF_01452">
    <property type="entry name" value="AddB_type1"/>
    <property type="match status" value="1"/>
</dbReference>
<dbReference type="InterPro" id="IPR049035">
    <property type="entry name" value="ADDB_N"/>
</dbReference>
<dbReference type="InterPro" id="IPR014140">
    <property type="entry name" value="DNA_helicase_suAddB"/>
</dbReference>
<dbReference type="InterPro" id="IPR027417">
    <property type="entry name" value="P-loop_NTPase"/>
</dbReference>
<dbReference type="InterPro" id="IPR011604">
    <property type="entry name" value="PDDEXK-like_dom_sf"/>
</dbReference>
<dbReference type="InterPro" id="IPR038726">
    <property type="entry name" value="PDDEXK_AddAB-type"/>
</dbReference>
<dbReference type="NCBIfam" id="TIGR02773">
    <property type="entry name" value="addB_Gpos"/>
    <property type="match status" value="1"/>
</dbReference>
<dbReference type="PANTHER" id="PTHR30591">
    <property type="entry name" value="RECBCD ENZYME SUBUNIT RECC"/>
    <property type="match status" value="1"/>
</dbReference>
<dbReference type="PANTHER" id="PTHR30591:SF1">
    <property type="entry name" value="RECBCD ENZYME SUBUNIT RECC"/>
    <property type="match status" value="1"/>
</dbReference>
<dbReference type="Pfam" id="PF21445">
    <property type="entry name" value="ADDB_N"/>
    <property type="match status" value="1"/>
</dbReference>
<dbReference type="Pfam" id="PF12705">
    <property type="entry name" value="PDDEXK_1"/>
    <property type="match status" value="1"/>
</dbReference>
<dbReference type="SUPFAM" id="SSF52540">
    <property type="entry name" value="P-loop containing nucleoside triphosphate hydrolases"/>
    <property type="match status" value="1"/>
</dbReference>
<protein>
    <recommendedName>
        <fullName evidence="1">ATP-dependent helicase/deoxyribonuclease subunit B</fullName>
        <ecNumber evidence="1">3.1.-.-</ecNumber>
    </recommendedName>
    <alternativeName>
        <fullName evidence="1">ATP-dependent helicase/nuclease subunit AddB</fullName>
    </alternativeName>
</protein>
<proteinExistence type="inferred from homology"/>
<accession>A5HYX0</accession>
<accession>A7G0V8</accession>
<organism>
    <name type="scientific">Clostridium botulinum (strain Hall / ATCC 3502 / NCTC 13319 / Type A)</name>
    <dbReference type="NCBI Taxonomy" id="441771"/>
    <lineage>
        <taxon>Bacteria</taxon>
        <taxon>Bacillati</taxon>
        <taxon>Bacillota</taxon>
        <taxon>Clostridia</taxon>
        <taxon>Eubacteriales</taxon>
        <taxon>Clostridiaceae</taxon>
        <taxon>Clostridium</taxon>
    </lineage>
</organism>
<name>ADDB_CLOBH</name>
<reference key="1">
    <citation type="journal article" date="2007" name="Genome Res.">
        <title>Genome sequence of a proteolytic (Group I) Clostridium botulinum strain Hall A and comparative analysis of the clostridial genomes.</title>
        <authorList>
            <person name="Sebaihia M."/>
            <person name="Peck M.W."/>
            <person name="Minton N.P."/>
            <person name="Thomson N.R."/>
            <person name="Holden M.T.G."/>
            <person name="Mitchell W.J."/>
            <person name="Carter A.T."/>
            <person name="Bentley S.D."/>
            <person name="Mason D.R."/>
            <person name="Crossman L."/>
            <person name="Paul C.J."/>
            <person name="Ivens A."/>
            <person name="Wells-Bennik M.H.J."/>
            <person name="Davis I.J."/>
            <person name="Cerdeno-Tarraga A.M."/>
            <person name="Churcher C."/>
            <person name="Quail M.A."/>
            <person name="Chillingworth T."/>
            <person name="Feltwell T."/>
            <person name="Fraser A."/>
            <person name="Goodhead I."/>
            <person name="Hance Z."/>
            <person name="Jagels K."/>
            <person name="Larke N."/>
            <person name="Maddison M."/>
            <person name="Moule S."/>
            <person name="Mungall K."/>
            <person name="Norbertczak H."/>
            <person name="Rabbinowitsch E."/>
            <person name="Sanders M."/>
            <person name="Simmonds M."/>
            <person name="White B."/>
            <person name="Whithead S."/>
            <person name="Parkhill J."/>
        </authorList>
    </citation>
    <scope>NUCLEOTIDE SEQUENCE [LARGE SCALE GENOMIC DNA]</scope>
    <source>
        <strain>Hall / ATCC 3502 / NCTC 13319 / Type A</strain>
    </source>
</reference>
<reference key="2">
    <citation type="journal article" date="2007" name="PLoS ONE">
        <title>Analysis of the neurotoxin complex genes in Clostridium botulinum A1-A4 and B1 strains: BoNT/A3, /Ba4 and /B1 clusters are located within plasmids.</title>
        <authorList>
            <person name="Smith T.J."/>
            <person name="Hill K.K."/>
            <person name="Foley B.T."/>
            <person name="Detter J.C."/>
            <person name="Munk A.C."/>
            <person name="Bruce D.C."/>
            <person name="Doggett N.A."/>
            <person name="Smith L.A."/>
            <person name="Marks J.D."/>
            <person name="Xie G."/>
            <person name="Brettin T.S."/>
        </authorList>
    </citation>
    <scope>NUCLEOTIDE SEQUENCE [LARGE SCALE GENOMIC DNA]</scope>
    <source>
        <strain>Hall / ATCC 3502 / NCTC 13319 / Type A</strain>
    </source>
</reference>
<evidence type="ECO:0000255" key="1">
    <source>
        <dbReference type="HAMAP-Rule" id="MF_01452"/>
    </source>
</evidence>
<evidence type="ECO:0000305" key="2"/>
<gene>
    <name evidence="1" type="primary">addB</name>
    <name type="ordered locus">CBO0426</name>
    <name type="ordered locus">CLC_0492</name>
</gene>
<keyword id="KW-0004">4Fe-4S</keyword>
<keyword id="KW-0067">ATP-binding</keyword>
<keyword id="KW-0227">DNA damage</keyword>
<keyword id="KW-0234">DNA repair</keyword>
<keyword id="KW-0238">DNA-binding</keyword>
<keyword id="KW-0269">Exonuclease</keyword>
<keyword id="KW-0347">Helicase</keyword>
<keyword id="KW-0378">Hydrolase</keyword>
<keyword id="KW-0408">Iron</keyword>
<keyword id="KW-0411">Iron-sulfur</keyword>
<keyword id="KW-0479">Metal-binding</keyword>
<keyword id="KW-0540">Nuclease</keyword>
<keyword id="KW-0547">Nucleotide-binding</keyword>
<keyword id="KW-1185">Reference proteome</keyword>
<feature type="chain" id="PRO_0000379172" description="ATP-dependent helicase/deoxyribonuclease subunit B">
    <location>
        <begin position="1"/>
        <end position="1150"/>
    </location>
</feature>
<feature type="binding site" evidence="1">
    <location>
        <begin position="8"/>
        <end position="15"/>
    </location>
    <ligand>
        <name>ATP</name>
        <dbReference type="ChEBI" id="CHEBI:30616"/>
    </ligand>
</feature>
<feature type="binding site" evidence="1">
    <location>
        <position position="786"/>
    </location>
    <ligand>
        <name>[4Fe-4S] cluster</name>
        <dbReference type="ChEBI" id="CHEBI:49883"/>
    </ligand>
</feature>
<feature type="binding site" evidence="1">
    <location>
        <position position="1106"/>
    </location>
    <ligand>
        <name>[4Fe-4S] cluster</name>
        <dbReference type="ChEBI" id="CHEBI:49883"/>
    </ligand>
</feature>
<feature type="binding site" evidence="1">
    <location>
        <position position="1109"/>
    </location>
    <ligand>
        <name>[4Fe-4S] cluster</name>
        <dbReference type="ChEBI" id="CHEBI:49883"/>
    </ligand>
</feature>
<feature type="binding site" evidence="1">
    <location>
        <position position="1115"/>
    </location>
    <ligand>
        <name>[4Fe-4S] cluster</name>
        <dbReference type="ChEBI" id="CHEBI:49883"/>
    </ligand>
</feature>
<feature type="sequence conflict" description="In Ref. 2; ABS37895." evidence="2" ref="2">
    <original>N</original>
    <variation>K</variation>
    <location>
        <position position="273"/>
    </location>
</feature>
<feature type="sequence conflict" description="In Ref. 2; ABS37895." evidence="2" ref="2">
    <original>P</original>
    <variation>L</variation>
    <location>
        <position position="437"/>
    </location>
</feature>
<feature type="sequence conflict" description="In Ref. 2; ABS37895." evidence="2" ref="2">
    <original>HKF</original>
    <variation>YKS</variation>
    <location>
        <begin position="440"/>
        <end position="442"/>
    </location>
</feature>
<feature type="sequence conflict" description="In Ref. 2; ABS37895." evidence="2" ref="2">
    <original>A</original>
    <variation>D</variation>
    <location>
        <position position="1140"/>
    </location>
</feature>
<feature type="sequence conflict" description="In Ref. 2; ABS37895." evidence="2" ref="2">
    <original>Y</original>
    <variation>C</variation>
    <location>
        <position position="1147"/>
    </location>
</feature>
<sequence>MSLRFIYGRAGSGKSQYCLNSIKNRIEEDIDRPLILLVPEQFSFQAEKNLIEVLDEKTGFKTQVLSFKRMAYRVFNEVGGITAKHMNESGKSMLLYNIIEDNKNNLKVFKKAAKRQGFITTISDIITEFKRYNITPEIILNNLENIEGDNLKYKMEDLALIFSQFETRLHKNYIDNEDDLTILAEKLNKSKQFDNAEIWIDEFSSFSPQEYSVLEKLLLKSYRINITLCTDYLNQGRFVDTTDVFSPIKNTENKLLQIIEDNNIKLDKPIALNCDPCARFKNSAELQHLEKNMFSFPYKEYKNETKDICMLKTLNQFTEIENTAKDIIKLCIDKGCRFKDIAVITGDLEGYENIISSVFLQYNIPFFIDKKREINNNPIIVLILSALEVLSKNWTYESVFRYLKTGLLDINNEEMDILENYVLANGIKGYQWTNDKPWEHKFFSNYELEDQVEKELLAKINDIRYKAMEPIVTLNKNFKSIDKAKEFCEVLYEFLCNINLPDKIQNMIEDFKVEGEIEKASEYNQIWNIVMEVLDQIVEVIGEEKISLKEFFKILQTGLSEYEIGLIPPTLDQVMVGSITRLRSHNINTLYIVGVNDGIFPSPLKEEGILSDDDRKFLGDKGLEIAKDTKSIAFEEQFLVYSTLTTPSKYLRLSYPIADGEGKTLRPSIIISRIKKIFTNICEENDIVKLNGEEEELKNISSAKPTFNYLISNLRKDVEGAKIDNIWGDTYKWYLENEFWIEKLNRLIKGFDYTNQSKYIETKKIRNLYGKPLKISVSRVEKFSQCPFAYFVQYGLKAKDRKIFNLSYPDLGIFMHSILEKFSHELEKQGLEWDTMDLNWAEEEIDKLINEELDNKSLDILNSSKRYEYVTKSVKKILKRSIWLIGEHIKRGNFKPSYYELSFDIDGDYPPIAMELHSGEVVNLIGRVDRVDLLQKDGATYLKIIDYKSGAKEFKLSDVYYGLQLQLLIYLDAILTELAERSGINGEPGALLYLKLDDPIVKNTVDMSDEEIEKSIIKNLKMKGLILNDPNVIRDMDNIISGISDIIPVMVKKDGGVSEGRSSVATKEEFETLRKYVRYTIIEICEEMLEGNIEIKPYKKKDGSSCDYCIYSSVCKFDTNIRGNKYNILIDKKDEEVWDAIKKKLEYKNI</sequence>
<comment type="function">
    <text evidence="1">The heterodimer acts as both an ATP-dependent DNA helicase and an ATP-dependent, dual-direction single-stranded exonuclease. Recognizes the chi site generating a DNA molecule suitable for the initiation of homologous recombination. The AddB subunit has 5' -&gt; 3' nuclease activity but not helicase activity.</text>
</comment>
<comment type="cofactor">
    <cofactor evidence="1">
        <name>Mg(2+)</name>
        <dbReference type="ChEBI" id="CHEBI:18420"/>
    </cofactor>
</comment>
<comment type="cofactor">
    <cofactor evidence="1">
        <name>[4Fe-4S] cluster</name>
        <dbReference type="ChEBI" id="CHEBI:49883"/>
    </cofactor>
    <text evidence="1">Binds 1 [4Fe-4S] cluster.</text>
</comment>
<comment type="subunit">
    <text evidence="1">Heterodimer of AddA and AddB.</text>
</comment>
<comment type="miscellaneous">
    <text evidence="1">Despite having conserved helicase domains, this subunit does not have helicase activity.</text>
</comment>
<comment type="similarity">
    <text evidence="1">Belongs to the helicase family. AddB/RexB type 1 subfamily.</text>
</comment>